<dbReference type="EMBL" id="AF424783">
    <property type="protein sequence ID" value="AAL82378.1"/>
    <property type="molecule type" value="Genomic_DNA"/>
</dbReference>
<dbReference type="RefSeq" id="NP_803403.1">
    <property type="nucleotide sequence ID" value="NC_004617.1"/>
</dbReference>
<dbReference type="SMR" id="Q8SDJ8"/>
<dbReference type="KEGG" id="vg:1258157"/>
<dbReference type="Proteomes" id="UP000002099">
    <property type="component" value="Segment"/>
</dbReference>
<dbReference type="GO" id="GO:0005576">
    <property type="term" value="C:extracellular region"/>
    <property type="evidence" value="ECO:0007669"/>
    <property type="project" value="UniProtKB-SubCell"/>
</dbReference>
<dbReference type="Gene3D" id="3.10.20.130">
    <property type="match status" value="1"/>
</dbReference>
<dbReference type="InterPro" id="IPR004093">
    <property type="entry name" value="SAK"/>
</dbReference>
<dbReference type="InterPro" id="IPR036120">
    <property type="entry name" value="SAK/SK_sf"/>
</dbReference>
<dbReference type="Pfam" id="PF02821">
    <property type="entry name" value="Staphylokinase"/>
    <property type="match status" value="1"/>
</dbReference>
<dbReference type="SUPFAM" id="SSF54328">
    <property type="entry name" value="Staphylokinase/streptokinase"/>
    <property type="match status" value="1"/>
</dbReference>
<organism>
    <name type="scientific">Staphylococcus phage phi13</name>
    <name type="common">Bacteriophage phi-13</name>
    <dbReference type="NCBI Taxonomy" id="2992645"/>
    <lineage>
        <taxon>Viruses</taxon>
        <taxon>Duplodnaviria</taxon>
        <taxon>Heunggongvirae</taxon>
        <taxon>Uroviricota</taxon>
        <taxon>Caudoviricetes</taxon>
        <taxon>Bronfenbrennervirinae</taxon>
        <taxon>Peeveelvirus</taxon>
        <taxon>Peeveelvirus pv13</taxon>
    </lineage>
</organism>
<evidence type="ECO:0000250" key="1"/>
<evidence type="ECO:0000305" key="2"/>
<organismHost>
    <name type="scientific">Pseudomonas</name>
    <dbReference type="NCBI Taxonomy" id="286"/>
</organismHost>
<reference key="1">
    <citation type="journal article" date="2002" name="Gene">
        <title>Comparative analysis of the genomes of the temperate bacteriophages phi 11, phi 12 and phi 13 of Staphylococcus aureus 8325.</title>
        <authorList>
            <person name="Iandolo J.J."/>
            <person name="Worrell V."/>
            <person name="Groicher K.H."/>
            <person name="Qian Y."/>
            <person name="Tian R."/>
            <person name="Kenton S."/>
            <person name="Dorman A."/>
            <person name="Ji H."/>
            <person name="Lin S."/>
            <person name="Loh P."/>
            <person name="Qi S."/>
            <person name="Zhu H."/>
            <person name="Roe B.A."/>
        </authorList>
    </citation>
    <scope>NUCLEOTIDE SEQUENCE [GENOMIC DNA]</scope>
</reference>
<sequence>MLKRSLLFLTVLLLLFSFSSITNEVSASSSFDKGKYKKGDDASYFEPTGPYLMVNVTGVDGKGNELLSPHYVEFPIKPGTTLTKEKIEYYVEWALDATAYKEFRVVELDPSAKIEVTYYDKNKKKEETKSFPITEKGFVVPDLSEHIKNPGFNLITKVIIEKK</sequence>
<gene>
    <name type="primary">sak</name>
</gene>
<feature type="signal peptide" evidence="1">
    <location>
        <begin position="1"/>
        <end position="27"/>
    </location>
</feature>
<feature type="chain" id="PRO_0000031606" description="Staphylokinase">
    <location>
        <begin position="28"/>
        <end position="163"/>
    </location>
</feature>
<name>SAK_BPPHD</name>
<protein>
    <recommendedName>
        <fullName>Staphylokinase</fullName>
    </recommendedName>
</protein>
<comment type="function">
    <text evidence="1">Potent plasminogen activator that converts plasminogen into plasmin. It forms a 1:1 complex with plasmin, which in turn activates other plasminogen molecules (By similarity).</text>
</comment>
<comment type="subcellular location">
    <subcellularLocation>
        <location evidence="1">Secreted</location>
    </subcellularLocation>
</comment>
<comment type="similarity">
    <text evidence="2">Belongs to the staphylokinase family.</text>
</comment>
<proteinExistence type="inferred from homology"/>
<accession>Q8SDJ8</accession>
<keyword id="KW-0617">Plasminogen activation</keyword>
<keyword id="KW-1185">Reference proteome</keyword>
<keyword id="KW-0964">Secreted</keyword>
<keyword id="KW-0732">Signal</keyword>